<comment type="function">
    <text>Plant non-specific lipid-transfer proteins transfer phospholipids as well as galactolipids across membranes. May play a role in wax or cutin deposition in the cell walls of expanding epidermal cells and certain secretory tissues.</text>
</comment>
<comment type="allergen">
    <text>Causes an allergic reaction in human. Binds to IgE and induces histamine release from basophils of Pj-pollen-allergic subjects.</text>
</comment>
<comment type="similarity">
    <text evidence="3">Belongs to the plant LTP family.</text>
</comment>
<name>NLT22_PARJU</name>
<keyword id="KW-0020">Allergen</keyword>
<keyword id="KW-1015">Disulfide bond</keyword>
<keyword id="KW-0446">Lipid-binding</keyword>
<keyword id="KW-0732">Signal</keyword>
<keyword id="KW-0813">Transport</keyword>
<protein>
    <recommendedName>
        <fullName>Probable non-specific lipid-transfer protein 2</fullName>
        <shortName>LTP 2</shortName>
    </recommendedName>
    <alternativeName>
        <fullName>Allergen Par j II</fullName>
    </alternativeName>
    <alternativeName>
        <fullName>Major pollen allergen Par j 2.0102</fullName>
    </alternativeName>
    <alternativeName>
        <fullName>Protein P8</fullName>
    </alternativeName>
    <allergenName>Par j 2.0102</allergenName>
</protein>
<accession>O04403</accession>
<sequence>MRTVSMAALVVIAAALAWTSSAELASAPAPGEGPCGKVVHHIMPCLKFVKGEEKEPSKSCCSGTKKLSEEVKTTEQKREACKCIVAATKGISGIKNELVAEVPKKCGITTTLPPITADFDCSKIESTIFRGYY</sequence>
<feature type="signal peptide" evidence="2">
    <location>
        <begin position="1"/>
        <end position="31"/>
    </location>
</feature>
<feature type="chain" id="PRO_0000018399" description="Probable non-specific lipid-transfer protein 2">
    <location>
        <begin position="32"/>
        <end position="133"/>
    </location>
</feature>
<feature type="disulfide bond" evidence="1">
    <location>
        <begin position="35"/>
        <end position="83"/>
    </location>
</feature>
<feature type="disulfide bond" evidence="1">
    <location>
        <begin position="45"/>
        <end position="60"/>
    </location>
</feature>
<feature type="disulfide bond" evidence="1">
    <location>
        <begin position="61"/>
        <end position="106"/>
    </location>
</feature>
<feature type="disulfide bond" evidence="1">
    <location>
        <begin position="81"/>
        <end position="121"/>
    </location>
</feature>
<proteinExistence type="evidence at protein level"/>
<organism>
    <name type="scientific">Parietaria judaica</name>
    <name type="common">Pellitory-of-the-wall</name>
    <name type="synonym">Parietaria diffusa</name>
    <dbReference type="NCBI Taxonomy" id="33127"/>
    <lineage>
        <taxon>Eukaryota</taxon>
        <taxon>Viridiplantae</taxon>
        <taxon>Streptophyta</taxon>
        <taxon>Embryophyta</taxon>
        <taxon>Tracheophyta</taxon>
        <taxon>Spermatophyta</taxon>
        <taxon>Magnoliopsida</taxon>
        <taxon>eudicotyledons</taxon>
        <taxon>Gunneridae</taxon>
        <taxon>Pentapetalae</taxon>
        <taxon>rosids</taxon>
        <taxon>fabids</taxon>
        <taxon>Rosales</taxon>
        <taxon>Urticaceae</taxon>
        <taxon>Parietaria</taxon>
    </lineage>
</organism>
<dbReference type="EMBL" id="X95866">
    <property type="protein sequence ID" value="CAA65122.1"/>
    <property type="molecule type" value="mRNA"/>
</dbReference>
<dbReference type="SMR" id="O04403"/>
<dbReference type="Allergome" id="507">
    <property type="allergen name" value="Par j 2"/>
</dbReference>
<dbReference type="Allergome" id="509">
    <property type="allergen name" value="Par j 2.0102"/>
</dbReference>
<dbReference type="GO" id="GO:0008289">
    <property type="term" value="F:lipid binding"/>
    <property type="evidence" value="ECO:0007669"/>
    <property type="project" value="UniProtKB-KW"/>
</dbReference>
<dbReference type="GO" id="GO:0006869">
    <property type="term" value="P:lipid transport"/>
    <property type="evidence" value="ECO:0007669"/>
    <property type="project" value="InterPro"/>
</dbReference>
<dbReference type="CDD" id="cd01960">
    <property type="entry name" value="nsLTP1"/>
    <property type="match status" value="1"/>
</dbReference>
<dbReference type="Gene3D" id="1.10.110.10">
    <property type="entry name" value="Plant lipid-transfer and hydrophobic proteins"/>
    <property type="match status" value="1"/>
</dbReference>
<dbReference type="InterPro" id="IPR036312">
    <property type="entry name" value="Bifun_inhib/LTP/seed_sf"/>
</dbReference>
<dbReference type="InterPro" id="IPR016140">
    <property type="entry name" value="Bifunc_inhib/LTP/seed_store"/>
</dbReference>
<dbReference type="InterPro" id="IPR000528">
    <property type="entry name" value="Plant_nsLTP"/>
</dbReference>
<dbReference type="PANTHER" id="PTHR33076">
    <property type="entry name" value="NON-SPECIFIC LIPID-TRANSFER PROTEIN 2-RELATED"/>
    <property type="match status" value="1"/>
</dbReference>
<dbReference type="Pfam" id="PF00234">
    <property type="entry name" value="Tryp_alpha_amyl"/>
    <property type="match status" value="1"/>
</dbReference>
<dbReference type="PRINTS" id="PR00382">
    <property type="entry name" value="LIPIDTRNSFER"/>
</dbReference>
<dbReference type="SMART" id="SM00499">
    <property type="entry name" value="AAI"/>
    <property type="match status" value="1"/>
</dbReference>
<dbReference type="SUPFAM" id="SSF47699">
    <property type="entry name" value="Bifunctional inhibitor/lipid-transfer protein/seed storage 2S albumin"/>
    <property type="match status" value="1"/>
</dbReference>
<dbReference type="PROSITE" id="PS00597">
    <property type="entry name" value="PLANT_LTP"/>
    <property type="match status" value="1"/>
</dbReference>
<reference key="1">
    <citation type="submission" date="1996-01" db="EMBL/GenBank/DDBJ databases">
        <authorList>
            <person name="Duro G."/>
            <person name="Colombo P."/>
            <person name="Costa M.A."/>
            <person name="Izzo V."/>
            <person name="Porcasi R."/>
            <person name="di Fiore R."/>
            <person name="Locorotondo G."/>
            <person name="Mirisola M.G."/>
            <person name="Cocchiara R."/>
            <person name="Geraci D."/>
        </authorList>
    </citation>
    <scope>NUCLEOTIDE SEQUENCE [MRNA]</scope>
    <source>
        <tissue>Flower</tissue>
    </source>
</reference>
<evidence type="ECO:0000250" key="1"/>
<evidence type="ECO:0000255" key="2"/>
<evidence type="ECO:0000305" key="3"/>